<comment type="function">
    <text evidence="1">Efficiently catalyzes the hydrolysis of the 3'-phosphate from 3',5'-bis-phosphonucleotides as well as the successive hydrolysis of 5'-phosphomononucleotides from the 5'-end of short pieces of RNA and DNA, with no specificity toward the identity of the nucleotide base. Is more efficient at hydrolyzing RNA oligonucleotides than DNA oligonucleotides. This enzyme can also hydrolyze annealed DNA duplexes, albeit at a catalytic efficiency lower than that of the corresponding single-stranded oligonucleotides.</text>
</comment>
<comment type="catalytic activity">
    <reaction evidence="1">
        <text>a ribonucleoside 3',5'-bisphosphate + H2O = a ribonucleoside 5'-phosphate + phosphate</text>
        <dbReference type="Rhea" id="RHEA:43532"/>
        <dbReference type="ChEBI" id="CHEBI:15377"/>
        <dbReference type="ChEBI" id="CHEBI:43474"/>
        <dbReference type="ChEBI" id="CHEBI:58043"/>
        <dbReference type="ChEBI" id="CHEBI:83402"/>
        <dbReference type="EC" id="3.1.3.97"/>
    </reaction>
</comment>
<comment type="cofactor">
    <cofactor evidence="1">
        <name>Mn(2+)</name>
        <dbReference type="ChEBI" id="CHEBI:29035"/>
    </cofactor>
</comment>
<comment type="similarity">
    <text evidence="3">Belongs to the PHP family. TrpH/YciV subfamily.</text>
</comment>
<keyword id="KW-0269">Exonuclease</keyword>
<keyword id="KW-0378">Hydrolase</keyword>
<keyword id="KW-0464">Manganese</keyword>
<keyword id="KW-0479">Metal-binding</keyword>
<keyword id="KW-0540">Nuclease</keyword>
<keyword id="KW-0547">Nucleotide-binding</keyword>
<keyword id="KW-1185">Reference proteome</keyword>
<proteinExistence type="inferred from homology"/>
<gene>
    <name evidence="4" type="ordered locus">HI_1400</name>
</gene>
<reference key="1">
    <citation type="journal article" date="1995" name="Science">
        <title>Whole-genome random sequencing and assembly of Haemophilus influenzae Rd.</title>
        <authorList>
            <person name="Fleischmann R.D."/>
            <person name="Adams M.D."/>
            <person name="White O."/>
            <person name="Clayton R.A."/>
            <person name="Kirkness E.F."/>
            <person name="Kerlavage A.R."/>
            <person name="Bult C.J."/>
            <person name="Tomb J.-F."/>
            <person name="Dougherty B.A."/>
            <person name="Merrick J.M."/>
            <person name="McKenney K."/>
            <person name="Sutton G.G."/>
            <person name="FitzHugh W."/>
            <person name="Fields C.A."/>
            <person name="Gocayne J.D."/>
            <person name="Scott J.D."/>
            <person name="Shirley R."/>
            <person name="Liu L.-I."/>
            <person name="Glodek A."/>
            <person name="Kelley J.M."/>
            <person name="Weidman J.F."/>
            <person name="Phillips C.A."/>
            <person name="Spriggs T."/>
            <person name="Hedblom E."/>
            <person name="Cotton M.D."/>
            <person name="Utterback T.R."/>
            <person name="Hanna M.C."/>
            <person name="Nguyen D.T."/>
            <person name="Saudek D.M."/>
            <person name="Brandon R.C."/>
            <person name="Fine L.D."/>
            <person name="Fritchman J.L."/>
            <person name="Fuhrmann J.L."/>
            <person name="Geoghagen N.S.M."/>
            <person name="Gnehm C.L."/>
            <person name="McDonald L.A."/>
            <person name="Small K.V."/>
            <person name="Fraser C.M."/>
            <person name="Smith H.O."/>
            <person name="Venter J.C."/>
        </authorList>
    </citation>
    <scope>NUCLEOTIDE SEQUENCE [LARGE SCALE GENOMIC DNA]</scope>
    <source>
        <strain>ATCC 51907 / DSM 11121 / KW20 / Rd</strain>
    </source>
</reference>
<accession>P44176</accession>
<name>RNAAM_HAEIN</name>
<sequence>MTKKYDLHCHSTASDGVLSPTELVHRAYAQGVNVLALCDHDTIAGIDEAEIAAKEVGIELITGVEISTNWEGRGIHIVGLNFDKTHPKMTALLQSQKALREKRAVEIGDKLEKAGIPNAYDGAKALADGEVTRAHYARYLVQIGKVSNDGQAFKRYLGQGKSAFVKAEWADIPTAIETIHAAGGIAIIAHPLRYNMTGKWVRKLIVDFKAWGGDGMEMADCGQTKDQRQMLARWAKEFDLQGSVGSDFHFPCGWIELGKNLDLVDSVIPVWEKF</sequence>
<feature type="chain" id="PRO_0000065639" description="5'-3' exoribonuclease">
    <location>
        <begin position="1"/>
        <end position="274"/>
    </location>
</feature>
<feature type="binding site" evidence="2">
    <location>
        <position position="8"/>
    </location>
    <ligand>
        <name>Mn(2+)</name>
        <dbReference type="ChEBI" id="CHEBI:29035"/>
        <label>1</label>
    </ligand>
</feature>
<feature type="binding site" evidence="2">
    <location>
        <position position="10"/>
    </location>
    <ligand>
        <name>Mn(2+)</name>
        <dbReference type="ChEBI" id="CHEBI:29035"/>
        <label>1</label>
    </ligand>
</feature>
<feature type="binding site" evidence="2">
    <location>
        <position position="15"/>
    </location>
    <ligand>
        <name>Mn(2+)</name>
        <dbReference type="ChEBI" id="CHEBI:29035"/>
        <label>2</label>
    </ligand>
</feature>
<feature type="binding site" evidence="2">
    <location>
        <position position="40"/>
    </location>
    <ligand>
        <name>Mn(2+)</name>
        <dbReference type="ChEBI" id="CHEBI:29035"/>
        <label>2</label>
    </ligand>
</feature>
<feature type="binding site" evidence="2">
    <location>
        <position position="65"/>
    </location>
    <ligand>
        <name>Mn(2+)</name>
        <dbReference type="ChEBI" id="CHEBI:29035"/>
        <label>1</label>
    </ligand>
</feature>
<feature type="binding site" evidence="2">
    <location>
        <position position="65"/>
    </location>
    <ligand>
        <name>Mn(2+)</name>
        <dbReference type="ChEBI" id="CHEBI:29035"/>
        <label>3</label>
    </ligand>
</feature>
<feature type="binding site" evidence="2">
    <location>
        <position position="76"/>
    </location>
    <ligand>
        <name>Mn(2+)</name>
        <dbReference type="ChEBI" id="CHEBI:29035"/>
        <label>3</label>
    </ligand>
</feature>
<feature type="binding site" evidence="2">
    <location>
        <position position="190"/>
    </location>
    <ligand>
        <name>Mn(2+)</name>
        <dbReference type="ChEBI" id="CHEBI:29035"/>
        <label>3</label>
    </ligand>
</feature>
<feature type="binding site" evidence="2">
    <location>
        <position position="247"/>
    </location>
    <ligand>
        <name>Mn(2+)</name>
        <dbReference type="ChEBI" id="CHEBI:29035"/>
        <label>1</label>
    </ligand>
</feature>
<feature type="binding site" evidence="2">
    <location>
        <position position="249"/>
    </location>
    <ligand>
        <name>Mn(2+)</name>
        <dbReference type="ChEBI" id="CHEBI:29035"/>
        <label>2</label>
    </ligand>
</feature>
<dbReference type="EC" id="3.1.13.-" evidence="1"/>
<dbReference type="EC" id="3.1.3.97" evidence="1"/>
<dbReference type="EMBL" id="L42023">
    <property type="protein sequence ID" value="AAC23046.1"/>
    <property type="molecule type" value="Genomic_DNA"/>
</dbReference>
<dbReference type="PIR" id="F64027">
    <property type="entry name" value="F64027"/>
</dbReference>
<dbReference type="RefSeq" id="NP_439553.1">
    <property type="nucleotide sequence ID" value="NC_000907.1"/>
</dbReference>
<dbReference type="SMR" id="P44176"/>
<dbReference type="STRING" id="71421.HI_1400"/>
<dbReference type="EnsemblBacteria" id="AAC23046">
    <property type="protein sequence ID" value="AAC23046"/>
    <property type="gene ID" value="HI_1400"/>
</dbReference>
<dbReference type="KEGG" id="hin:HI_1400"/>
<dbReference type="PATRIC" id="fig|71421.8.peg.1460"/>
<dbReference type="eggNOG" id="COG0613">
    <property type="taxonomic scope" value="Bacteria"/>
</dbReference>
<dbReference type="HOGENOM" id="CLU_067347_0_0_6"/>
<dbReference type="OrthoDB" id="9804333at2"/>
<dbReference type="PhylomeDB" id="P44176"/>
<dbReference type="BioCyc" id="HINF71421:G1GJ1-1427-MONOMER"/>
<dbReference type="Proteomes" id="UP000000579">
    <property type="component" value="Chromosome"/>
</dbReference>
<dbReference type="GO" id="GO:0097657">
    <property type="term" value="F:3',5'-nucleotide bisphosphate phosphatase activity"/>
    <property type="evidence" value="ECO:0007669"/>
    <property type="project" value="UniProtKB-EC"/>
</dbReference>
<dbReference type="GO" id="GO:0035312">
    <property type="term" value="F:5'-3' DNA exonuclease activity"/>
    <property type="evidence" value="ECO:0000318"/>
    <property type="project" value="GO_Central"/>
</dbReference>
<dbReference type="GO" id="GO:0004534">
    <property type="term" value="F:5'-3' RNA exonuclease activity"/>
    <property type="evidence" value="ECO:0000318"/>
    <property type="project" value="GO_Central"/>
</dbReference>
<dbReference type="GO" id="GO:0046872">
    <property type="term" value="F:metal ion binding"/>
    <property type="evidence" value="ECO:0007669"/>
    <property type="project" value="UniProtKB-KW"/>
</dbReference>
<dbReference type="GO" id="GO:0000166">
    <property type="term" value="F:nucleotide binding"/>
    <property type="evidence" value="ECO:0007669"/>
    <property type="project" value="UniProtKB-KW"/>
</dbReference>
<dbReference type="CDD" id="cd07438">
    <property type="entry name" value="PHP_HisPPase_AMP"/>
    <property type="match status" value="1"/>
</dbReference>
<dbReference type="Gene3D" id="1.10.150.650">
    <property type="match status" value="1"/>
</dbReference>
<dbReference type="Gene3D" id="3.20.20.140">
    <property type="entry name" value="Metal-dependent hydrolases"/>
    <property type="match status" value="1"/>
</dbReference>
<dbReference type="InterPro" id="IPR004013">
    <property type="entry name" value="PHP_dom"/>
</dbReference>
<dbReference type="InterPro" id="IPR052018">
    <property type="entry name" value="PHP_domain"/>
</dbReference>
<dbReference type="InterPro" id="IPR003141">
    <property type="entry name" value="Pol/His_phosphatase_N"/>
</dbReference>
<dbReference type="InterPro" id="IPR016195">
    <property type="entry name" value="Pol/histidinol_Pase-like"/>
</dbReference>
<dbReference type="NCBIfam" id="NF047791">
    <property type="entry name" value="RNaseRnm"/>
    <property type="match status" value="1"/>
</dbReference>
<dbReference type="PANTHER" id="PTHR42924">
    <property type="entry name" value="EXONUCLEASE"/>
    <property type="match status" value="1"/>
</dbReference>
<dbReference type="PANTHER" id="PTHR42924:SF3">
    <property type="entry name" value="POLYMERASE_HISTIDINOL PHOSPHATASE N-TERMINAL DOMAIN-CONTAINING PROTEIN"/>
    <property type="match status" value="1"/>
</dbReference>
<dbReference type="Pfam" id="PF02811">
    <property type="entry name" value="PHP"/>
    <property type="match status" value="1"/>
</dbReference>
<dbReference type="SMART" id="SM00481">
    <property type="entry name" value="POLIIIAc"/>
    <property type="match status" value="1"/>
</dbReference>
<dbReference type="SUPFAM" id="SSF89550">
    <property type="entry name" value="PHP domain-like"/>
    <property type="match status" value="1"/>
</dbReference>
<evidence type="ECO:0000250" key="1">
    <source>
        <dbReference type="UniProtKB" id="P77766"/>
    </source>
</evidence>
<evidence type="ECO:0000250" key="2">
    <source>
        <dbReference type="UniProtKB" id="Q7NXD4"/>
    </source>
</evidence>
<evidence type="ECO:0000305" key="3"/>
<evidence type="ECO:0000312" key="4">
    <source>
        <dbReference type="EMBL" id="AAC23046.1"/>
    </source>
</evidence>
<protein>
    <recommendedName>
        <fullName evidence="1">5'-3' exoribonuclease</fullName>
        <ecNumber evidence="1">3.1.13.-</ecNumber>
    </recommendedName>
    <alternativeName>
        <fullName evidence="1">3',5'-nucleotide bisphosphate phosphatase</fullName>
        <ecNumber evidence="1">3.1.3.97</ecNumber>
    </alternativeName>
    <alternativeName>
        <fullName evidence="1">RNase AM</fullName>
    </alternativeName>
</protein>
<organism>
    <name type="scientific">Haemophilus influenzae (strain ATCC 51907 / DSM 11121 / KW20 / Rd)</name>
    <dbReference type="NCBI Taxonomy" id="71421"/>
    <lineage>
        <taxon>Bacteria</taxon>
        <taxon>Pseudomonadati</taxon>
        <taxon>Pseudomonadota</taxon>
        <taxon>Gammaproteobacteria</taxon>
        <taxon>Pasteurellales</taxon>
        <taxon>Pasteurellaceae</taxon>
        <taxon>Haemophilus</taxon>
    </lineage>
</organism>